<feature type="chain" id="PRO_1000013169" description="Acyl-[acyl-carrier-protein]--UDP-N-acetylglucosamine O-acyltransferase">
    <location>
        <begin position="1"/>
        <end position="258"/>
    </location>
</feature>
<keyword id="KW-0012">Acyltransferase</keyword>
<keyword id="KW-0963">Cytoplasm</keyword>
<keyword id="KW-0441">Lipid A biosynthesis</keyword>
<keyword id="KW-0444">Lipid biosynthesis</keyword>
<keyword id="KW-0443">Lipid metabolism</keyword>
<keyword id="KW-1185">Reference proteome</keyword>
<keyword id="KW-0677">Repeat</keyword>
<keyword id="KW-0808">Transferase</keyword>
<dbReference type="EC" id="2.3.1.129" evidence="1"/>
<dbReference type="EMBL" id="CP000113">
    <property type="protein sequence ID" value="ABF89630.1"/>
    <property type="molecule type" value="Genomic_DNA"/>
</dbReference>
<dbReference type="RefSeq" id="WP_011554711.1">
    <property type="nucleotide sequence ID" value="NC_008095.1"/>
</dbReference>
<dbReference type="SMR" id="Q1D387"/>
<dbReference type="STRING" id="246197.MXAN_4724"/>
<dbReference type="EnsemblBacteria" id="ABF89630">
    <property type="protein sequence ID" value="ABF89630"/>
    <property type="gene ID" value="MXAN_4724"/>
</dbReference>
<dbReference type="GeneID" id="41362023"/>
<dbReference type="KEGG" id="mxa:MXAN_4724"/>
<dbReference type="eggNOG" id="COG1043">
    <property type="taxonomic scope" value="Bacteria"/>
</dbReference>
<dbReference type="HOGENOM" id="CLU_061249_0_0_7"/>
<dbReference type="OrthoDB" id="9807278at2"/>
<dbReference type="UniPathway" id="UPA00359">
    <property type="reaction ID" value="UER00477"/>
</dbReference>
<dbReference type="Proteomes" id="UP000002402">
    <property type="component" value="Chromosome"/>
</dbReference>
<dbReference type="GO" id="GO:0005737">
    <property type="term" value="C:cytoplasm"/>
    <property type="evidence" value="ECO:0007669"/>
    <property type="project" value="UniProtKB-SubCell"/>
</dbReference>
<dbReference type="GO" id="GO:0016020">
    <property type="term" value="C:membrane"/>
    <property type="evidence" value="ECO:0007669"/>
    <property type="project" value="GOC"/>
</dbReference>
<dbReference type="GO" id="GO:0008780">
    <property type="term" value="F:acyl-[acyl-carrier-protein]-UDP-N-acetylglucosamine O-acyltransferase activity"/>
    <property type="evidence" value="ECO:0007669"/>
    <property type="project" value="UniProtKB-UniRule"/>
</dbReference>
<dbReference type="GO" id="GO:0009245">
    <property type="term" value="P:lipid A biosynthetic process"/>
    <property type="evidence" value="ECO:0007669"/>
    <property type="project" value="UniProtKB-UniRule"/>
</dbReference>
<dbReference type="CDD" id="cd03351">
    <property type="entry name" value="LbH_UDP-GlcNAc_AT"/>
    <property type="match status" value="1"/>
</dbReference>
<dbReference type="Gene3D" id="2.160.10.10">
    <property type="entry name" value="Hexapeptide repeat proteins"/>
    <property type="match status" value="1"/>
</dbReference>
<dbReference type="Gene3D" id="1.20.1180.10">
    <property type="entry name" value="Udp N-acetylglucosamine O-acyltransferase, C-terminal domain"/>
    <property type="match status" value="1"/>
</dbReference>
<dbReference type="HAMAP" id="MF_00387">
    <property type="entry name" value="LpxA"/>
    <property type="match status" value="1"/>
</dbReference>
<dbReference type="InterPro" id="IPR029098">
    <property type="entry name" value="Acetyltransf_C"/>
</dbReference>
<dbReference type="InterPro" id="IPR037157">
    <property type="entry name" value="Acetyltransf_C_sf"/>
</dbReference>
<dbReference type="InterPro" id="IPR001451">
    <property type="entry name" value="Hexapep"/>
</dbReference>
<dbReference type="InterPro" id="IPR010137">
    <property type="entry name" value="Lipid_A_LpxA"/>
</dbReference>
<dbReference type="InterPro" id="IPR011004">
    <property type="entry name" value="Trimer_LpxA-like_sf"/>
</dbReference>
<dbReference type="NCBIfam" id="TIGR01852">
    <property type="entry name" value="lipid_A_lpxA"/>
    <property type="match status" value="1"/>
</dbReference>
<dbReference type="NCBIfam" id="NF003657">
    <property type="entry name" value="PRK05289.1"/>
    <property type="match status" value="1"/>
</dbReference>
<dbReference type="PANTHER" id="PTHR43480">
    <property type="entry name" value="ACYL-[ACYL-CARRIER-PROTEIN]--UDP-N-ACETYLGLUCOSAMINE O-ACYLTRANSFERASE"/>
    <property type="match status" value="1"/>
</dbReference>
<dbReference type="PANTHER" id="PTHR43480:SF1">
    <property type="entry name" value="ACYL-[ACYL-CARRIER-PROTEIN]--UDP-N-ACETYLGLUCOSAMINE O-ACYLTRANSFERASE, MITOCHONDRIAL-RELATED"/>
    <property type="match status" value="1"/>
</dbReference>
<dbReference type="Pfam" id="PF13720">
    <property type="entry name" value="Acetyltransf_11"/>
    <property type="match status" value="1"/>
</dbReference>
<dbReference type="Pfam" id="PF00132">
    <property type="entry name" value="Hexapep"/>
    <property type="match status" value="2"/>
</dbReference>
<dbReference type="PIRSF" id="PIRSF000456">
    <property type="entry name" value="UDP-GlcNAc_acltr"/>
    <property type="match status" value="1"/>
</dbReference>
<dbReference type="SUPFAM" id="SSF51161">
    <property type="entry name" value="Trimeric LpxA-like enzymes"/>
    <property type="match status" value="1"/>
</dbReference>
<protein>
    <recommendedName>
        <fullName evidence="1">Acyl-[acyl-carrier-protein]--UDP-N-acetylglucosamine O-acyltransferase</fullName>
        <shortName evidence="1">UDP-N-acetylglucosamine acyltransferase</shortName>
        <ecNumber evidence="1">2.3.1.129</ecNumber>
    </recommendedName>
</protein>
<evidence type="ECO:0000255" key="1">
    <source>
        <dbReference type="HAMAP-Rule" id="MF_00387"/>
    </source>
</evidence>
<organism>
    <name type="scientific">Myxococcus xanthus (strain DK1622)</name>
    <dbReference type="NCBI Taxonomy" id="246197"/>
    <lineage>
        <taxon>Bacteria</taxon>
        <taxon>Pseudomonadati</taxon>
        <taxon>Myxococcota</taxon>
        <taxon>Myxococcia</taxon>
        <taxon>Myxococcales</taxon>
        <taxon>Cystobacterineae</taxon>
        <taxon>Myxococcaceae</taxon>
        <taxon>Myxococcus</taxon>
    </lineage>
</organism>
<accession>Q1D387</accession>
<gene>
    <name evidence="1" type="primary">lpxA</name>
    <name type="ordered locus">MXAN_4724</name>
</gene>
<sequence length="258" mass="27621">MAQVHPTAVVHPDARLHETVEVGPYSIIGPQVTIGAGSRVGPHVVIEGRTTLGERNRIFQFASVGADPQDLKYAGEDTELVLGDDNQIREFVSLHKGTAGGGGATRVGSGNLFMANCHVAHDCVVGNGCRIGNGSALAGHVTMEDHVIISGLAAVHQFTRLGKHAFISGGAMVTMDIPPYATAQGDRAELVGLNTVGLERSGFSKEQIERVKEAHRILFRSKLTLQEAMVRLRAELAGHSEVDHLIQFIQQSKRGLTR</sequence>
<comment type="function">
    <text evidence="1">Involved in the biosynthesis of lipid A, a phosphorylated glycolipid that anchors the lipopolysaccharide to the outer membrane of the cell.</text>
</comment>
<comment type="catalytic activity">
    <reaction evidence="1">
        <text>a (3R)-hydroxyacyl-[ACP] + UDP-N-acetyl-alpha-D-glucosamine = a UDP-3-O-[(3R)-3-hydroxyacyl]-N-acetyl-alpha-D-glucosamine + holo-[ACP]</text>
        <dbReference type="Rhea" id="RHEA:67812"/>
        <dbReference type="Rhea" id="RHEA-COMP:9685"/>
        <dbReference type="Rhea" id="RHEA-COMP:9945"/>
        <dbReference type="ChEBI" id="CHEBI:57705"/>
        <dbReference type="ChEBI" id="CHEBI:64479"/>
        <dbReference type="ChEBI" id="CHEBI:78827"/>
        <dbReference type="ChEBI" id="CHEBI:173225"/>
        <dbReference type="EC" id="2.3.1.129"/>
    </reaction>
</comment>
<comment type="pathway">
    <text evidence="1">Glycolipid biosynthesis; lipid IV(A) biosynthesis; lipid IV(A) from (3R)-3-hydroxytetradecanoyl-[acyl-carrier-protein] and UDP-N-acetyl-alpha-D-glucosamine: step 1/6.</text>
</comment>
<comment type="subunit">
    <text evidence="1">Homotrimer.</text>
</comment>
<comment type="subcellular location">
    <subcellularLocation>
        <location evidence="1">Cytoplasm</location>
    </subcellularLocation>
</comment>
<comment type="similarity">
    <text evidence="1">Belongs to the transferase hexapeptide repeat family. LpxA subfamily.</text>
</comment>
<reference key="1">
    <citation type="journal article" date="2006" name="Proc. Natl. Acad. Sci. U.S.A.">
        <title>Evolution of sensory complexity recorded in a myxobacterial genome.</title>
        <authorList>
            <person name="Goldman B.S."/>
            <person name="Nierman W.C."/>
            <person name="Kaiser D."/>
            <person name="Slater S.C."/>
            <person name="Durkin A.S."/>
            <person name="Eisen J.A."/>
            <person name="Ronning C.M."/>
            <person name="Barbazuk W.B."/>
            <person name="Blanchard M."/>
            <person name="Field C."/>
            <person name="Halling C."/>
            <person name="Hinkle G."/>
            <person name="Iartchuk O."/>
            <person name="Kim H.S."/>
            <person name="Mackenzie C."/>
            <person name="Madupu R."/>
            <person name="Miller N."/>
            <person name="Shvartsbeyn A."/>
            <person name="Sullivan S.A."/>
            <person name="Vaudin M."/>
            <person name="Wiegand R."/>
            <person name="Kaplan H.B."/>
        </authorList>
    </citation>
    <scope>NUCLEOTIDE SEQUENCE [LARGE SCALE GENOMIC DNA]</scope>
    <source>
        <strain>DK1622</strain>
    </source>
</reference>
<name>LPXA_MYXXD</name>
<proteinExistence type="inferred from homology"/>